<accession>P52854</accession>
<reference key="1">
    <citation type="submission" date="1996-03" db="EMBL/GenBank/DDBJ databases">
        <authorList>
            <person name="Elder R.O."/>
            <person name="Duhamel G.E."/>
            <person name="Joens J."/>
        </authorList>
    </citation>
    <scope>NUCLEOTIDE SEQUENCE [GENOMIC DNA]</scope>
    <source>
        <strain>B204</strain>
    </source>
</reference>
<dbReference type="EC" id="3.6.5.3" evidence="1"/>
<dbReference type="EMBL" id="U51635">
    <property type="protein sequence ID" value="AAA96520.1"/>
    <property type="molecule type" value="Genomic_DNA"/>
</dbReference>
<dbReference type="SMR" id="P52854"/>
<dbReference type="GO" id="GO:0005737">
    <property type="term" value="C:cytoplasm"/>
    <property type="evidence" value="ECO:0007669"/>
    <property type="project" value="UniProtKB-SubCell"/>
</dbReference>
<dbReference type="GO" id="GO:0005525">
    <property type="term" value="F:GTP binding"/>
    <property type="evidence" value="ECO:0007669"/>
    <property type="project" value="UniProtKB-UniRule"/>
</dbReference>
<dbReference type="GO" id="GO:0003924">
    <property type="term" value="F:GTPase activity"/>
    <property type="evidence" value="ECO:0007669"/>
    <property type="project" value="InterPro"/>
</dbReference>
<dbReference type="GO" id="GO:0003746">
    <property type="term" value="F:translation elongation factor activity"/>
    <property type="evidence" value="ECO:0007669"/>
    <property type="project" value="UniProtKB-UniRule"/>
</dbReference>
<dbReference type="CDD" id="cd01884">
    <property type="entry name" value="EF_Tu"/>
    <property type="match status" value="1"/>
</dbReference>
<dbReference type="CDD" id="cd03697">
    <property type="entry name" value="EFTU_II"/>
    <property type="match status" value="1"/>
</dbReference>
<dbReference type="CDD" id="cd03707">
    <property type="entry name" value="EFTU_III"/>
    <property type="match status" value="1"/>
</dbReference>
<dbReference type="FunFam" id="2.40.30.10:FF:000001">
    <property type="entry name" value="Elongation factor Tu"/>
    <property type="match status" value="1"/>
</dbReference>
<dbReference type="FunFam" id="3.40.50.300:FF:000003">
    <property type="entry name" value="Elongation factor Tu"/>
    <property type="match status" value="1"/>
</dbReference>
<dbReference type="Gene3D" id="3.40.50.300">
    <property type="entry name" value="P-loop containing nucleotide triphosphate hydrolases"/>
    <property type="match status" value="1"/>
</dbReference>
<dbReference type="Gene3D" id="2.40.30.10">
    <property type="entry name" value="Translation factors"/>
    <property type="match status" value="2"/>
</dbReference>
<dbReference type="HAMAP" id="MF_00118_B">
    <property type="entry name" value="EF_Tu_B"/>
    <property type="match status" value="1"/>
</dbReference>
<dbReference type="InterPro" id="IPR041709">
    <property type="entry name" value="EF-Tu_GTP-bd"/>
</dbReference>
<dbReference type="InterPro" id="IPR050055">
    <property type="entry name" value="EF-Tu_GTPase"/>
</dbReference>
<dbReference type="InterPro" id="IPR004161">
    <property type="entry name" value="EFTu-like_2"/>
</dbReference>
<dbReference type="InterPro" id="IPR033720">
    <property type="entry name" value="EFTU_2"/>
</dbReference>
<dbReference type="InterPro" id="IPR027417">
    <property type="entry name" value="P-loop_NTPase"/>
</dbReference>
<dbReference type="InterPro" id="IPR005225">
    <property type="entry name" value="Small_GTP-bd"/>
</dbReference>
<dbReference type="InterPro" id="IPR000795">
    <property type="entry name" value="T_Tr_GTP-bd_dom"/>
</dbReference>
<dbReference type="InterPro" id="IPR009000">
    <property type="entry name" value="Transl_B-barrel_sf"/>
</dbReference>
<dbReference type="InterPro" id="IPR009001">
    <property type="entry name" value="Transl_elong_EF1A/Init_IF2_C"/>
</dbReference>
<dbReference type="InterPro" id="IPR004541">
    <property type="entry name" value="Transl_elong_EFTu/EF1A_bac/org"/>
</dbReference>
<dbReference type="InterPro" id="IPR004160">
    <property type="entry name" value="Transl_elong_EFTu/EF1A_C"/>
</dbReference>
<dbReference type="NCBIfam" id="TIGR00485">
    <property type="entry name" value="EF-Tu"/>
    <property type="match status" value="1"/>
</dbReference>
<dbReference type="NCBIfam" id="NF000766">
    <property type="entry name" value="PRK00049.1"/>
    <property type="match status" value="1"/>
</dbReference>
<dbReference type="NCBIfam" id="NF009372">
    <property type="entry name" value="PRK12735.1"/>
    <property type="match status" value="1"/>
</dbReference>
<dbReference type="NCBIfam" id="NF009373">
    <property type="entry name" value="PRK12736.1"/>
    <property type="match status" value="1"/>
</dbReference>
<dbReference type="NCBIfam" id="TIGR00231">
    <property type="entry name" value="small_GTP"/>
    <property type="match status" value="1"/>
</dbReference>
<dbReference type="PANTHER" id="PTHR43721:SF22">
    <property type="entry name" value="ELONGATION FACTOR TU, MITOCHONDRIAL"/>
    <property type="match status" value="1"/>
</dbReference>
<dbReference type="PANTHER" id="PTHR43721">
    <property type="entry name" value="ELONGATION FACTOR TU-RELATED"/>
    <property type="match status" value="1"/>
</dbReference>
<dbReference type="Pfam" id="PF00009">
    <property type="entry name" value="GTP_EFTU"/>
    <property type="match status" value="1"/>
</dbReference>
<dbReference type="Pfam" id="PF03144">
    <property type="entry name" value="GTP_EFTU_D2"/>
    <property type="match status" value="1"/>
</dbReference>
<dbReference type="Pfam" id="PF03143">
    <property type="entry name" value="GTP_EFTU_D3"/>
    <property type="match status" value="1"/>
</dbReference>
<dbReference type="PRINTS" id="PR00315">
    <property type="entry name" value="ELONGATNFCT"/>
</dbReference>
<dbReference type="SUPFAM" id="SSF50465">
    <property type="entry name" value="EF-Tu/eEF-1alpha/eIF2-gamma C-terminal domain"/>
    <property type="match status" value="1"/>
</dbReference>
<dbReference type="SUPFAM" id="SSF52540">
    <property type="entry name" value="P-loop containing nucleoside triphosphate hydrolases"/>
    <property type="match status" value="1"/>
</dbReference>
<dbReference type="SUPFAM" id="SSF50447">
    <property type="entry name" value="Translation proteins"/>
    <property type="match status" value="1"/>
</dbReference>
<dbReference type="PROSITE" id="PS51722">
    <property type="entry name" value="G_TR_2"/>
    <property type="match status" value="1"/>
</dbReference>
<organism>
    <name type="scientific">Brachyspira hyodysenteriae</name>
    <name type="common">Treponema hyodysenteriae</name>
    <dbReference type="NCBI Taxonomy" id="159"/>
    <lineage>
        <taxon>Bacteria</taxon>
        <taxon>Pseudomonadati</taxon>
        <taxon>Spirochaetota</taxon>
        <taxon>Spirochaetia</taxon>
        <taxon>Brachyspirales</taxon>
        <taxon>Brachyspiraceae</taxon>
        <taxon>Brachyspira</taxon>
    </lineage>
</organism>
<sequence>MAKGTYEGNKTHVNVGTIGHVDHGKTTLTSAITAVSSAMFPATVQKVAYDSVAKASESQGRRDPTKILTIATSHVEYESDNRHYAHVDCPGHADYIKNMITGAAQMDGAILVVSAEDGVMPQTKEHVLLSRQVGVNYIVVFLNKCDKLDDPEMAEIVEAEVIDVLDHYGFDGSKTPIIRGSAIKAIQAIEAGKDPRTDPDCKCILDLLNALDTYIPDPVREVDKDFLMSIEDVYSIPGRGTVVTGRIERGKIEKGNEVEIVGIRPTQKTTCTGVEMFKKEVVGIAGYNVGCLLRGIERKAVERGQVLAKPGTITPHKKFEAEVYILKKEEGGRHSGFVSGYRPQMYFRTTDVTGVINLQGDAQMIMPGDNANLTIELITPIAMEEKQRFAIREGGKTVGNGVVTKNIRII</sequence>
<keyword id="KW-0963">Cytoplasm</keyword>
<keyword id="KW-0251">Elongation factor</keyword>
<keyword id="KW-0342">GTP-binding</keyword>
<keyword id="KW-0378">Hydrolase</keyword>
<keyword id="KW-0460">Magnesium</keyword>
<keyword id="KW-0479">Metal-binding</keyword>
<keyword id="KW-0547">Nucleotide-binding</keyword>
<keyword id="KW-0648">Protein biosynthesis</keyword>
<feature type="chain" id="PRO_0000091428" description="Elongation factor Tu">
    <location>
        <begin position="1"/>
        <end position="410"/>
    </location>
</feature>
<feature type="domain" description="tr-type G">
    <location>
        <begin position="10"/>
        <end position="219"/>
    </location>
</feature>
<feature type="binding site" evidence="1">
    <location>
        <begin position="19"/>
        <end position="26"/>
    </location>
    <ligand>
        <name>GTP</name>
        <dbReference type="ChEBI" id="CHEBI:37565"/>
    </ligand>
</feature>
<feature type="binding site" evidence="1">
    <location>
        <position position="26"/>
    </location>
    <ligand>
        <name>Mg(2+)</name>
        <dbReference type="ChEBI" id="CHEBI:18420"/>
    </ligand>
</feature>
<feature type="binding site" evidence="1">
    <location>
        <begin position="88"/>
        <end position="92"/>
    </location>
    <ligand>
        <name>GTP</name>
        <dbReference type="ChEBI" id="CHEBI:37565"/>
    </ligand>
</feature>
<feature type="binding site" evidence="1">
    <location>
        <begin position="143"/>
        <end position="146"/>
    </location>
    <ligand>
        <name>GTP</name>
        <dbReference type="ChEBI" id="CHEBI:37565"/>
    </ligand>
</feature>
<proteinExistence type="inferred from homology"/>
<gene>
    <name evidence="1" type="primary">tuf</name>
    <name type="synonym">tufA</name>
</gene>
<protein>
    <recommendedName>
        <fullName evidence="1">Elongation factor Tu</fullName>
        <shortName evidence="1">EF-Tu</shortName>
        <ecNumber evidence="1">3.6.5.3</ecNumber>
    </recommendedName>
</protein>
<name>EFTU_BRAHO</name>
<comment type="function">
    <text evidence="1">GTP hydrolase that promotes the GTP-dependent binding of aminoacyl-tRNA to the A-site of ribosomes during protein biosynthesis.</text>
</comment>
<comment type="catalytic activity">
    <reaction evidence="1">
        <text>GTP + H2O = GDP + phosphate + H(+)</text>
        <dbReference type="Rhea" id="RHEA:19669"/>
        <dbReference type="ChEBI" id="CHEBI:15377"/>
        <dbReference type="ChEBI" id="CHEBI:15378"/>
        <dbReference type="ChEBI" id="CHEBI:37565"/>
        <dbReference type="ChEBI" id="CHEBI:43474"/>
        <dbReference type="ChEBI" id="CHEBI:58189"/>
        <dbReference type="EC" id="3.6.5.3"/>
    </reaction>
    <physiologicalReaction direction="left-to-right" evidence="1">
        <dbReference type="Rhea" id="RHEA:19670"/>
    </physiologicalReaction>
</comment>
<comment type="subunit">
    <text evidence="1">Monomer.</text>
</comment>
<comment type="subcellular location">
    <subcellularLocation>
        <location evidence="1">Cytoplasm</location>
    </subcellularLocation>
</comment>
<comment type="similarity">
    <text evidence="1">Belongs to the TRAFAC class translation factor GTPase superfamily. Classic translation factor GTPase family. EF-Tu/EF-1A subfamily.</text>
</comment>
<evidence type="ECO:0000255" key="1">
    <source>
        <dbReference type="HAMAP-Rule" id="MF_00118"/>
    </source>
</evidence>